<gene>
    <name evidence="1" type="primary">atpG</name>
    <name type="ordered locus">APJL_1680</name>
</gene>
<evidence type="ECO:0000255" key="1">
    <source>
        <dbReference type="HAMAP-Rule" id="MF_00815"/>
    </source>
</evidence>
<dbReference type="EMBL" id="CP000687">
    <property type="protein sequence ID" value="ABY70232.1"/>
    <property type="molecule type" value="Genomic_DNA"/>
</dbReference>
<dbReference type="RefSeq" id="WP_012263331.1">
    <property type="nucleotide sequence ID" value="NC_010278.1"/>
</dbReference>
<dbReference type="SMR" id="B0BRX3"/>
<dbReference type="KEGG" id="apj:APJL_1680"/>
<dbReference type="HOGENOM" id="CLU_050669_0_1_6"/>
<dbReference type="Proteomes" id="UP000008547">
    <property type="component" value="Chromosome"/>
</dbReference>
<dbReference type="GO" id="GO:0005886">
    <property type="term" value="C:plasma membrane"/>
    <property type="evidence" value="ECO:0007669"/>
    <property type="project" value="UniProtKB-SubCell"/>
</dbReference>
<dbReference type="GO" id="GO:0045259">
    <property type="term" value="C:proton-transporting ATP synthase complex"/>
    <property type="evidence" value="ECO:0007669"/>
    <property type="project" value="UniProtKB-KW"/>
</dbReference>
<dbReference type="GO" id="GO:0005524">
    <property type="term" value="F:ATP binding"/>
    <property type="evidence" value="ECO:0007669"/>
    <property type="project" value="UniProtKB-UniRule"/>
</dbReference>
<dbReference type="GO" id="GO:0046933">
    <property type="term" value="F:proton-transporting ATP synthase activity, rotational mechanism"/>
    <property type="evidence" value="ECO:0007669"/>
    <property type="project" value="UniProtKB-UniRule"/>
</dbReference>
<dbReference type="GO" id="GO:0042777">
    <property type="term" value="P:proton motive force-driven plasma membrane ATP synthesis"/>
    <property type="evidence" value="ECO:0007669"/>
    <property type="project" value="UniProtKB-UniRule"/>
</dbReference>
<dbReference type="CDD" id="cd12151">
    <property type="entry name" value="F1-ATPase_gamma"/>
    <property type="match status" value="1"/>
</dbReference>
<dbReference type="FunFam" id="1.10.287.80:FF:000005">
    <property type="entry name" value="ATP synthase gamma chain"/>
    <property type="match status" value="2"/>
</dbReference>
<dbReference type="FunFam" id="3.40.1380.10:FF:000006">
    <property type="entry name" value="ATP synthase gamma chain"/>
    <property type="match status" value="1"/>
</dbReference>
<dbReference type="Gene3D" id="3.40.1380.10">
    <property type="match status" value="1"/>
</dbReference>
<dbReference type="Gene3D" id="1.10.287.80">
    <property type="entry name" value="ATP synthase, gamma subunit, helix hairpin domain"/>
    <property type="match status" value="2"/>
</dbReference>
<dbReference type="HAMAP" id="MF_00815">
    <property type="entry name" value="ATP_synth_gamma_bact"/>
    <property type="match status" value="1"/>
</dbReference>
<dbReference type="InterPro" id="IPR035968">
    <property type="entry name" value="ATP_synth_F1_ATPase_gsu"/>
</dbReference>
<dbReference type="InterPro" id="IPR000131">
    <property type="entry name" value="ATP_synth_F1_gsu"/>
</dbReference>
<dbReference type="InterPro" id="IPR023632">
    <property type="entry name" value="ATP_synth_F1_gsu_CS"/>
</dbReference>
<dbReference type="NCBIfam" id="TIGR01146">
    <property type="entry name" value="ATPsyn_F1gamma"/>
    <property type="match status" value="1"/>
</dbReference>
<dbReference type="NCBIfam" id="NF004144">
    <property type="entry name" value="PRK05621.1-1"/>
    <property type="match status" value="1"/>
</dbReference>
<dbReference type="PANTHER" id="PTHR11693">
    <property type="entry name" value="ATP SYNTHASE GAMMA CHAIN"/>
    <property type="match status" value="1"/>
</dbReference>
<dbReference type="PANTHER" id="PTHR11693:SF22">
    <property type="entry name" value="ATP SYNTHASE SUBUNIT GAMMA, MITOCHONDRIAL"/>
    <property type="match status" value="1"/>
</dbReference>
<dbReference type="Pfam" id="PF00231">
    <property type="entry name" value="ATP-synt"/>
    <property type="match status" value="1"/>
</dbReference>
<dbReference type="PRINTS" id="PR00126">
    <property type="entry name" value="ATPASEGAMMA"/>
</dbReference>
<dbReference type="SUPFAM" id="SSF52943">
    <property type="entry name" value="ATP synthase (F1-ATPase), gamma subunit"/>
    <property type="match status" value="1"/>
</dbReference>
<dbReference type="PROSITE" id="PS00153">
    <property type="entry name" value="ATPASE_GAMMA"/>
    <property type="match status" value="1"/>
</dbReference>
<keyword id="KW-0066">ATP synthesis</keyword>
<keyword id="KW-0997">Cell inner membrane</keyword>
<keyword id="KW-1003">Cell membrane</keyword>
<keyword id="KW-0139">CF(1)</keyword>
<keyword id="KW-0375">Hydrogen ion transport</keyword>
<keyword id="KW-0406">Ion transport</keyword>
<keyword id="KW-0472">Membrane</keyword>
<keyword id="KW-0813">Transport</keyword>
<protein>
    <recommendedName>
        <fullName evidence="1">ATP synthase gamma chain</fullName>
    </recommendedName>
    <alternativeName>
        <fullName evidence="1">ATP synthase F1 sector gamma subunit</fullName>
    </alternativeName>
    <alternativeName>
        <fullName evidence="1">F-ATPase gamma subunit</fullName>
    </alternativeName>
</protein>
<accession>B0BRX3</accession>
<name>ATPG_ACTPJ</name>
<reference key="1">
    <citation type="journal article" date="2008" name="PLoS ONE">
        <title>Genome biology of Actinobacillus pleuropneumoniae JL03, an isolate of serotype 3 prevalent in China.</title>
        <authorList>
            <person name="Xu Z."/>
            <person name="Zhou Y."/>
            <person name="Li L."/>
            <person name="Zhou R."/>
            <person name="Xiao S."/>
            <person name="Wan Y."/>
            <person name="Zhang S."/>
            <person name="Wang K."/>
            <person name="Li W."/>
            <person name="Li L."/>
            <person name="Jin H."/>
            <person name="Kang M."/>
            <person name="Dalai B."/>
            <person name="Li T."/>
            <person name="Liu L."/>
            <person name="Cheng Y."/>
            <person name="Zhang L."/>
            <person name="Xu T."/>
            <person name="Zheng H."/>
            <person name="Pu S."/>
            <person name="Wang B."/>
            <person name="Gu W."/>
            <person name="Zhang X.L."/>
            <person name="Zhu G.-F."/>
            <person name="Wang S."/>
            <person name="Zhao G.-P."/>
            <person name="Chen H."/>
        </authorList>
    </citation>
    <scope>NUCLEOTIDE SEQUENCE [LARGE SCALE GENOMIC DNA]</scope>
    <source>
        <strain>JL03</strain>
    </source>
</reference>
<organism>
    <name type="scientific">Actinobacillus pleuropneumoniae serotype 3 (strain JL03)</name>
    <dbReference type="NCBI Taxonomy" id="434271"/>
    <lineage>
        <taxon>Bacteria</taxon>
        <taxon>Pseudomonadati</taxon>
        <taxon>Pseudomonadota</taxon>
        <taxon>Gammaproteobacteria</taxon>
        <taxon>Pasteurellales</taxon>
        <taxon>Pasteurellaceae</taxon>
        <taxon>Actinobacillus</taxon>
    </lineage>
</organism>
<comment type="function">
    <text evidence="1">Produces ATP from ADP in the presence of a proton gradient across the membrane. The gamma chain is believed to be important in regulating ATPase activity and the flow of protons through the CF(0) complex.</text>
</comment>
<comment type="subunit">
    <text evidence="1">F-type ATPases have 2 components, CF(1) - the catalytic core - and CF(0) - the membrane proton channel. CF(1) has five subunits: alpha(3), beta(3), gamma(1), delta(1), epsilon(1). CF(0) has three main subunits: a, b and c.</text>
</comment>
<comment type="subcellular location">
    <subcellularLocation>
        <location evidence="1">Cell inner membrane</location>
        <topology evidence="1">Peripheral membrane protein</topology>
    </subcellularLocation>
</comment>
<comment type="similarity">
    <text evidence="1">Belongs to the ATPase gamma chain family.</text>
</comment>
<feature type="chain" id="PRO_1000134101" description="ATP synthase gamma chain">
    <location>
        <begin position="1"/>
        <end position="288"/>
    </location>
</feature>
<proteinExistence type="inferred from homology"/>
<sequence>MAGAKEIRTKIASVKNTQKITKAMEMVATSKMRKTQERMAASRPYSETIRKVISHIAKGSIGYKHPFLTERDIKKVGYLVVSTDRGLCGGLNINLFKATLNEFKTWKDKDVSVELGLVGSKGVSFYQNLGLNVRSQVTGLGDNPEMERIVGAVNEMINAFRNGEVDAVYVAYNRFENTMTQKPVIAQLLPLPKLDDDELDTKGSWDYIYEPNPQVLLDSLLVRYLETQVYQAVVDNLASEQAARMVAMKAATDNAGTLIDELQLVYNKARQASITNELNEIVAGAAAI</sequence>